<keyword id="KW-0066">ATP synthesis</keyword>
<keyword id="KW-0067">ATP-binding</keyword>
<keyword id="KW-0997">Cell inner membrane</keyword>
<keyword id="KW-1003">Cell membrane</keyword>
<keyword id="KW-0139">CF(1)</keyword>
<keyword id="KW-0375">Hydrogen ion transport</keyword>
<keyword id="KW-0406">Ion transport</keyword>
<keyword id="KW-0472">Membrane</keyword>
<keyword id="KW-0547">Nucleotide-binding</keyword>
<keyword id="KW-1278">Translocase</keyword>
<keyword id="KW-0813">Transport</keyword>
<reference key="1">
    <citation type="submission" date="2007-08" db="EMBL/GenBank/DDBJ databases">
        <authorList>
            <consortium name="The Vibrio harveyi Genome Sequencing Project"/>
            <person name="Bassler B."/>
            <person name="Clifton S.W."/>
            <person name="Fulton L."/>
            <person name="Delehaunty K."/>
            <person name="Fronick C."/>
            <person name="Harrison M."/>
            <person name="Markivic C."/>
            <person name="Fulton R."/>
            <person name="Tin-Wollam A.-M."/>
            <person name="Shah N."/>
            <person name="Pepin K."/>
            <person name="Nash W."/>
            <person name="Thiruvilangam P."/>
            <person name="Bhonagiri V."/>
            <person name="Waters C."/>
            <person name="Tu K.C."/>
            <person name="Irgon J."/>
            <person name="Wilson R.K."/>
        </authorList>
    </citation>
    <scope>NUCLEOTIDE SEQUENCE [LARGE SCALE GENOMIC DNA]</scope>
    <source>
        <strain>ATCC BAA-1116 / BB120</strain>
    </source>
</reference>
<dbReference type="EC" id="7.1.2.2" evidence="1"/>
<dbReference type="EMBL" id="CP000790">
    <property type="protein sequence ID" value="ABU73999.1"/>
    <property type="molecule type" value="Genomic_DNA"/>
</dbReference>
<dbReference type="RefSeq" id="WP_012129608.1">
    <property type="nucleotide sequence ID" value="NC_009784.1"/>
</dbReference>
<dbReference type="SMR" id="A7N6Q6"/>
<dbReference type="KEGG" id="vha:VIBHAR_06106"/>
<dbReference type="PATRIC" id="fig|338187.25.peg.4218"/>
<dbReference type="Proteomes" id="UP000008152">
    <property type="component" value="Chromosome II"/>
</dbReference>
<dbReference type="GO" id="GO:0005886">
    <property type="term" value="C:plasma membrane"/>
    <property type="evidence" value="ECO:0007669"/>
    <property type="project" value="UniProtKB-SubCell"/>
</dbReference>
<dbReference type="GO" id="GO:0045259">
    <property type="term" value="C:proton-transporting ATP synthase complex"/>
    <property type="evidence" value="ECO:0007669"/>
    <property type="project" value="UniProtKB-KW"/>
</dbReference>
<dbReference type="GO" id="GO:0043531">
    <property type="term" value="F:ADP binding"/>
    <property type="evidence" value="ECO:0007669"/>
    <property type="project" value="TreeGrafter"/>
</dbReference>
<dbReference type="GO" id="GO:0005524">
    <property type="term" value="F:ATP binding"/>
    <property type="evidence" value="ECO:0007669"/>
    <property type="project" value="UniProtKB-UniRule"/>
</dbReference>
<dbReference type="GO" id="GO:0046933">
    <property type="term" value="F:proton-transporting ATP synthase activity, rotational mechanism"/>
    <property type="evidence" value="ECO:0007669"/>
    <property type="project" value="UniProtKB-UniRule"/>
</dbReference>
<dbReference type="CDD" id="cd18113">
    <property type="entry name" value="ATP-synt_F1_alpha_C"/>
    <property type="match status" value="1"/>
</dbReference>
<dbReference type="CDD" id="cd18116">
    <property type="entry name" value="ATP-synt_F1_alpha_N"/>
    <property type="match status" value="1"/>
</dbReference>
<dbReference type="CDD" id="cd01132">
    <property type="entry name" value="F1-ATPase_alpha_CD"/>
    <property type="match status" value="1"/>
</dbReference>
<dbReference type="FunFam" id="1.20.150.20:FF:000001">
    <property type="entry name" value="ATP synthase subunit alpha"/>
    <property type="match status" value="1"/>
</dbReference>
<dbReference type="FunFam" id="2.40.30.20:FF:000001">
    <property type="entry name" value="ATP synthase subunit alpha"/>
    <property type="match status" value="1"/>
</dbReference>
<dbReference type="FunFam" id="3.40.50.300:FF:000002">
    <property type="entry name" value="ATP synthase subunit alpha"/>
    <property type="match status" value="1"/>
</dbReference>
<dbReference type="Gene3D" id="2.40.30.20">
    <property type="match status" value="1"/>
</dbReference>
<dbReference type="Gene3D" id="1.20.150.20">
    <property type="entry name" value="ATP synthase alpha/beta chain, C-terminal domain"/>
    <property type="match status" value="1"/>
</dbReference>
<dbReference type="Gene3D" id="3.40.50.300">
    <property type="entry name" value="P-loop containing nucleotide triphosphate hydrolases"/>
    <property type="match status" value="1"/>
</dbReference>
<dbReference type="HAMAP" id="MF_01346">
    <property type="entry name" value="ATP_synth_alpha_bact"/>
    <property type="match status" value="1"/>
</dbReference>
<dbReference type="InterPro" id="IPR023366">
    <property type="entry name" value="ATP_synth_asu-like_sf"/>
</dbReference>
<dbReference type="InterPro" id="IPR000793">
    <property type="entry name" value="ATP_synth_asu_C"/>
</dbReference>
<dbReference type="InterPro" id="IPR038376">
    <property type="entry name" value="ATP_synth_asu_C_sf"/>
</dbReference>
<dbReference type="InterPro" id="IPR033732">
    <property type="entry name" value="ATP_synth_F1_a_nt-bd_dom"/>
</dbReference>
<dbReference type="InterPro" id="IPR005294">
    <property type="entry name" value="ATP_synth_F1_asu"/>
</dbReference>
<dbReference type="InterPro" id="IPR020003">
    <property type="entry name" value="ATPase_a/bsu_AS"/>
</dbReference>
<dbReference type="InterPro" id="IPR004100">
    <property type="entry name" value="ATPase_F1/V1/A1_a/bsu_N"/>
</dbReference>
<dbReference type="InterPro" id="IPR036121">
    <property type="entry name" value="ATPase_F1/V1/A1_a/bsu_N_sf"/>
</dbReference>
<dbReference type="InterPro" id="IPR000194">
    <property type="entry name" value="ATPase_F1/V1/A1_a/bsu_nucl-bd"/>
</dbReference>
<dbReference type="InterPro" id="IPR027417">
    <property type="entry name" value="P-loop_NTPase"/>
</dbReference>
<dbReference type="NCBIfam" id="TIGR00962">
    <property type="entry name" value="atpA"/>
    <property type="match status" value="1"/>
</dbReference>
<dbReference type="NCBIfam" id="NF009884">
    <property type="entry name" value="PRK13343.1"/>
    <property type="match status" value="1"/>
</dbReference>
<dbReference type="PANTHER" id="PTHR48082">
    <property type="entry name" value="ATP SYNTHASE SUBUNIT ALPHA, MITOCHONDRIAL"/>
    <property type="match status" value="1"/>
</dbReference>
<dbReference type="PANTHER" id="PTHR48082:SF2">
    <property type="entry name" value="ATP SYNTHASE SUBUNIT ALPHA, MITOCHONDRIAL"/>
    <property type="match status" value="1"/>
</dbReference>
<dbReference type="Pfam" id="PF00006">
    <property type="entry name" value="ATP-synt_ab"/>
    <property type="match status" value="1"/>
</dbReference>
<dbReference type="Pfam" id="PF00306">
    <property type="entry name" value="ATP-synt_ab_C"/>
    <property type="match status" value="1"/>
</dbReference>
<dbReference type="Pfam" id="PF02874">
    <property type="entry name" value="ATP-synt_ab_N"/>
    <property type="match status" value="1"/>
</dbReference>
<dbReference type="SUPFAM" id="SSF47917">
    <property type="entry name" value="C-terminal domain of alpha and beta subunits of F1 ATP synthase"/>
    <property type="match status" value="1"/>
</dbReference>
<dbReference type="SUPFAM" id="SSF50615">
    <property type="entry name" value="N-terminal domain of alpha and beta subunits of F1 ATP synthase"/>
    <property type="match status" value="1"/>
</dbReference>
<dbReference type="SUPFAM" id="SSF52540">
    <property type="entry name" value="P-loop containing nucleoside triphosphate hydrolases"/>
    <property type="match status" value="1"/>
</dbReference>
<dbReference type="PROSITE" id="PS00152">
    <property type="entry name" value="ATPASE_ALPHA_BETA"/>
    <property type="match status" value="1"/>
</dbReference>
<name>ATPA2_VIBC1</name>
<organism>
    <name type="scientific">Vibrio campbellii (strain ATCC BAA-1116)</name>
    <dbReference type="NCBI Taxonomy" id="2902295"/>
    <lineage>
        <taxon>Bacteria</taxon>
        <taxon>Pseudomonadati</taxon>
        <taxon>Pseudomonadota</taxon>
        <taxon>Gammaproteobacteria</taxon>
        <taxon>Vibrionales</taxon>
        <taxon>Vibrionaceae</taxon>
        <taxon>Vibrio</taxon>
    </lineage>
</organism>
<sequence>MQLNSNEISELIRERIVNFNLESEARNEGTIVSVSDGIITIHGLADVMQGEMLELPNNRFALALNLERHSVGAVVMGPYADLSEGMKVKGTGRILEVPVGNGLLGRVVNTLGQPIDGKGAVSFDRMDPVEVIAPGVIDRKSVDQPIQTGYKAVDSMVPIGRGQRELIIGDRQTGKTAMAIDAIINQKELGVKCIYVAIGQKASTIANVVRKLEEHGALENTIVVVASASEAAALQYLAPYAGCTMGEYFRDRGEDALIVYDDLSKQAVAYRQISLLLKRPPGREAFPGDVFYLHSRLLERAARVNEEYVERFTNGEVKGKTGSLTALPIIETQAGDVSAFVPTNVISITDGQIFLQTQLFNSGLRPAVDPGISVSRVGGAAQTKVIKKLSGGIRTALAQYRELAAFAQFSSDLDEATRRQLDHGEKVTELMKQKQYAPMTVAEQALAIFAAEKGYLTDVALNQISRFEEELMAFGRTNAQPLLDKINQSGDYNDEIESELHSLLKEFTALQS</sequence>
<proteinExistence type="inferred from homology"/>
<accession>A7N6Q6</accession>
<feature type="chain" id="PRO_0000339063" description="ATP synthase subunit alpha 2">
    <location>
        <begin position="1"/>
        <end position="512"/>
    </location>
</feature>
<feature type="binding site" evidence="1">
    <location>
        <begin position="169"/>
        <end position="176"/>
    </location>
    <ligand>
        <name>ATP</name>
        <dbReference type="ChEBI" id="CHEBI:30616"/>
    </ligand>
</feature>
<feature type="site" description="Required for activity" evidence="1">
    <location>
        <position position="373"/>
    </location>
</feature>
<comment type="function">
    <text evidence="1">Produces ATP from ADP in the presence of a proton gradient across the membrane. The alpha chain is a regulatory subunit.</text>
</comment>
<comment type="catalytic activity">
    <reaction evidence="1">
        <text>ATP + H2O + 4 H(+)(in) = ADP + phosphate + 5 H(+)(out)</text>
        <dbReference type="Rhea" id="RHEA:57720"/>
        <dbReference type="ChEBI" id="CHEBI:15377"/>
        <dbReference type="ChEBI" id="CHEBI:15378"/>
        <dbReference type="ChEBI" id="CHEBI:30616"/>
        <dbReference type="ChEBI" id="CHEBI:43474"/>
        <dbReference type="ChEBI" id="CHEBI:456216"/>
        <dbReference type="EC" id="7.1.2.2"/>
    </reaction>
</comment>
<comment type="subunit">
    <text evidence="1">F-type ATPases have 2 components, CF(1) - the catalytic core - and CF(0) - the membrane proton channel. CF(1) has five subunits: alpha(3), beta(3), gamma(1), delta(1), epsilon(1). CF(0) has three main subunits: a(1), b(2) and c(9-12). The alpha and beta chains form an alternating ring which encloses part of the gamma chain. CF(1) is attached to CF(0) by a central stalk formed by the gamma and epsilon chains, while a peripheral stalk is formed by the delta and b chains.</text>
</comment>
<comment type="subcellular location">
    <subcellularLocation>
        <location evidence="1">Cell inner membrane</location>
        <topology evidence="1">Peripheral membrane protein</topology>
    </subcellularLocation>
</comment>
<comment type="similarity">
    <text evidence="1">Belongs to the ATPase alpha/beta chains family.</text>
</comment>
<gene>
    <name evidence="1" type="primary">atpA2</name>
    <name type="ordered locus">VIBHAR_06106</name>
</gene>
<evidence type="ECO:0000255" key="1">
    <source>
        <dbReference type="HAMAP-Rule" id="MF_01346"/>
    </source>
</evidence>
<protein>
    <recommendedName>
        <fullName evidence="1">ATP synthase subunit alpha 2</fullName>
        <ecNumber evidence="1">7.1.2.2</ecNumber>
    </recommendedName>
    <alternativeName>
        <fullName evidence="1">ATP synthase F1 sector subunit alpha 2</fullName>
    </alternativeName>
    <alternativeName>
        <fullName evidence="1">F-ATPase subunit alpha 2</fullName>
    </alternativeName>
</protein>